<protein>
    <recommendedName>
        <fullName evidence="1">Ribonuclease M5</fullName>
        <ecNumber evidence="1">3.1.26.8</ecNumber>
    </recommendedName>
    <alternativeName>
        <fullName evidence="1">RNase M5</fullName>
    </alternativeName>
    <alternativeName>
        <fullName evidence="1">Ribosomal RNA terminal maturase M5</fullName>
    </alternativeName>
</protein>
<feature type="chain" id="PRO_0000416743" description="Ribonuclease M5">
    <location>
        <begin position="1"/>
        <end position="181"/>
    </location>
</feature>
<feature type="domain" description="Toprim" evidence="1">
    <location>
        <begin position="5"/>
        <end position="88"/>
    </location>
</feature>
<feature type="binding site" evidence="1">
    <location>
        <position position="11"/>
    </location>
    <ligand>
        <name>Mg(2+)</name>
        <dbReference type="ChEBI" id="CHEBI:18420"/>
        <label>1</label>
        <note>catalytic</note>
    </ligand>
</feature>
<feature type="binding site" evidence="1">
    <location>
        <position position="57"/>
    </location>
    <ligand>
        <name>Mg(2+)</name>
        <dbReference type="ChEBI" id="CHEBI:18420"/>
        <label>1</label>
        <note>catalytic</note>
    </ligand>
</feature>
<feature type="binding site" evidence="1">
    <location>
        <position position="57"/>
    </location>
    <ligand>
        <name>Mg(2+)</name>
        <dbReference type="ChEBI" id="CHEBI:18420"/>
        <label>2</label>
    </ligand>
</feature>
<feature type="binding site" evidence="1">
    <location>
        <position position="59"/>
    </location>
    <ligand>
        <name>Mg(2+)</name>
        <dbReference type="ChEBI" id="CHEBI:18420"/>
        <label>2</label>
    </ligand>
</feature>
<keyword id="KW-0963">Cytoplasm</keyword>
<keyword id="KW-0255">Endonuclease</keyword>
<keyword id="KW-0378">Hydrolase</keyword>
<keyword id="KW-0460">Magnesium</keyword>
<keyword id="KW-0479">Metal-binding</keyword>
<keyword id="KW-0540">Nuclease</keyword>
<keyword id="KW-1185">Reference proteome</keyword>
<keyword id="KW-0690">Ribosome biogenesis</keyword>
<keyword id="KW-0694">RNA-binding</keyword>
<keyword id="KW-0698">rRNA processing</keyword>
<keyword id="KW-0699">rRNA-binding</keyword>
<proteinExistence type="inferred from homology"/>
<evidence type="ECO:0000255" key="1">
    <source>
        <dbReference type="HAMAP-Rule" id="MF_01469"/>
    </source>
</evidence>
<gene>
    <name evidence="1" type="primary">rnmV</name>
    <name type="ordered locus">BB_0626</name>
</gene>
<organism>
    <name type="scientific">Borreliella burgdorferi (strain ATCC 35210 / DSM 4680 / CIP 102532 / B31)</name>
    <name type="common">Borrelia burgdorferi</name>
    <dbReference type="NCBI Taxonomy" id="224326"/>
    <lineage>
        <taxon>Bacteria</taxon>
        <taxon>Pseudomonadati</taxon>
        <taxon>Spirochaetota</taxon>
        <taxon>Spirochaetia</taxon>
        <taxon>Spirochaetales</taxon>
        <taxon>Borreliaceae</taxon>
        <taxon>Borreliella</taxon>
    </lineage>
</organism>
<accession>O51571</accession>
<dbReference type="EC" id="3.1.26.8" evidence="1"/>
<dbReference type="EMBL" id="AE000783">
    <property type="protein sequence ID" value="AAC66987.1"/>
    <property type="molecule type" value="Genomic_DNA"/>
</dbReference>
<dbReference type="PIR" id="A70178">
    <property type="entry name" value="A70178"/>
</dbReference>
<dbReference type="RefSeq" id="NP_212760.1">
    <property type="nucleotide sequence ID" value="NC_001318.1"/>
</dbReference>
<dbReference type="RefSeq" id="WP_002657333.1">
    <property type="nucleotide sequence ID" value="NC_001318.1"/>
</dbReference>
<dbReference type="SMR" id="O51571"/>
<dbReference type="STRING" id="224326.BB_0626"/>
<dbReference type="PaxDb" id="224326-BB_0626"/>
<dbReference type="EnsemblBacteria" id="AAC66987">
    <property type="protein sequence ID" value="AAC66987"/>
    <property type="gene ID" value="BB_0626"/>
</dbReference>
<dbReference type="GeneID" id="56568701"/>
<dbReference type="KEGG" id="bbu:BB_0626"/>
<dbReference type="PATRIC" id="fig|224326.49.peg.1016"/>
<dbReference type="HOGENOM" id="CLU_109405_0_0_12"/>
<dbReference type="OrthoDB" id="9791329at2"/>
<dbReference type="Proteomes" id="UP000001807">
    <property type="component" value="Chromosome"/>
</dbReference>
<dbReference type="GO" id="GO:0005737">
    <property type="term" value="C:cytoplasm"/>
    <property type="evidence" value="ECO:0007669"/>
    <property type="project" value="UniProtKB-SubCell"/>
</dbReference>
<dbReference type="GO" id="GO:0046872">
    <property type="term" value="F:metal ion binding"/>
    <property type="evidence" value="ECO:0007669"/>
    <property type="project" value="UniProtKB-KW"/>
</dbReference>
<dbReference type="GO" id="GO:0043822">
    <property type="term" value="F:ribonuclease M5 activity"/>
    <property type="evidence" value="ECO:0007669"/>
    <property type="project" value="UniProtKB-EC"/>
</dbReference>
<dbReference type="GO" id="GO:0019843">
    <property type="term" value="F:rRNA binding"/>
    <property type="evidence" value="ECO:0007669"/>
    <property type="project" value="UniProtKB-KW"/>
</dbReference>
<dbReference type="GO" id="GO:0006364">
    <property type="term" value="P:rRNA processing"/>
    <property type="evidence" value="ECO:0007669"/>
    <property type="project" value="UniProtKB-KW"/>
</dbReference>
<dbReference type="CDD" id="cd01027">
    <property type="entry name" value="TOPRIM_RNase_M5_like"/>
    <property type="match status" value="1"/>
</dbReference>
<dbReference type="Gene3D" id="3.40.1360.10">
    <property type="match status" value="1"/>
</dbReference>
<dbReference type="HAMAP" id="MF_01469">
    <property type="entry name" value="RNase_M5"/>
    <property type="match status" value="1"/>
</dbReference>
<dbReference type="InterPro" id="IPR004466">
    <property type="entry name" value="RNase_M5"/>
</dbReference>
<dbReference type="InterPro" id="IPR025156">
    <property type="entry name" value="RNase_M5_C"/>
</dbReference>
<dbReference type="InterPro" id="IPR006171">
    <property type="entry name" value="TOPRIM_dom"/>
</dbReference>
<dbReference type="InterPro" id="IPR034141">
    <property type="entry name" value="TOPRIM_RNase_M5-like"/>
</dbReference>
<dbReference type="NCBIfam" id="TIGR00334">
    <property type="entry name" value="5S_RNA_mat_M5"/>
    <property type="match status" value="1"/>
</dbReference>
<dbReference type="PANTHER" id="PTHR39156:SF2">
    <property type="entry name" value="DNA PRIMASE (BACTERIAL TYPE) AND SMALL PRIMASE-LIKE PROTEINS"/>
    <property type="match status" value="1"/>
</dbReference>
<dbReference type="PANTHER" id="PTHR39156">
    <property type="entry name" value="RIBONUCLEASE M5"/>
    <property type="match status" value="1"/>
</dbReference>
<dbReference type="Pfam" id="PF13331">
    <property type="entry name" value="DUF4093"/>
    <property type="match status" value="1"/>
</dbReference>
<dbReference type="Pfam" id="PF01751">
    <property type="entry name" value="Toprim"/>
    <property type="match status" value="1"/>
</dbReference>
<dbReference type="PRINTS" id="PR00418">
    <property type="entry name" value="TPI2FAMILY"/>
</dbReference>
<dbReference type="SMART" id="SM00493">
    <property type="entry name" value="TOPRIM"/>
    <property type="match status" value="1"/>
</dbReference>
<dbReference type="SUPFAM" id="SSF110455">
    <property type="entry name" value="Toprim domain"/>
    <property type="match status" value="1"/>
</dbReference>
<dbReference type="PROSITE" id="PS50880">
    <property type="entry name" value="TOPRIM"/>
    <property type="match status" value="1"/>
</dbReference>
<sequence length="181" mass="20699">MEKIKEIIVVEGKDDLKRIKESFDCTVIETKGFALKIETIKLLKKALKYKGIIILTDSDKSGNIIRQKIVKYLGENNKIKHAYLNTKDTEVESVNKTEIIKILKGVGTLSKDNQKDLLKLSDLLELGIIGENSKENRQKIQKHFCLGDGNSKKLLERLNYFKIKKTDLKNQLALTNSPRRT</sequence>
<name>RNM5_BORBU</name>
<comment type="function">
    <text evidence="1">Required for correct processing of both the 5' and 3' ends of 5S rRNA precursor. Cleaves both sides of a double-stranded region yielding mature 5S rRNA in one step.</text>
</comment>
<comment type="catalytic activity">
    <reaction evidence="1">
        <text>Endonucleolytic cleavage of RNA, removing 21 and 42 nucleotides, respectively, from the 5'- and 3'-termini of a 5S-rRNA precursor.</text>
        <dbReference type="EC" id="3.1.26.8"/>
    </reaction>
</comment>
<comment type="cofactor">
    <cofactor evidence="1">
        <name>Mg(2+)</name>
        <dbReference type="ChEBI" id="CHEBI:18420"/>
    </cofactor>
    <text evidence="1">Binds two Mg(2+) per subunit.</text>
</comment>
<comment type="subcellular location">
    <subcellularLocation>
        <location evidence="1">Cytoplasm</location>
    </subcellularLocation>
</comment>
<comment type="similarity">
    <text evidence="1">Belongs to the ribonuclease M5 family.</text>
</comment>
<reference key="1">
    <citation type="journal article" date="1997" name="Nature">
        <title>Genomic sequence of a Lyme disease spirochaete, Borrelia burgdorferi.</title>
        <authorList>
            <person name="Fraser C.M."/>
            <person name="Casjens S."/>
            <person name="Huang W.M."/>
            <person name="Sutton G.G."/>
            <person name="Clayton R.A."/>
            <person name="Lathigra R."/>
            <person name="White O."/>
            <person name="Ketchum K.A."/>
            <person name="Dodson R.J."/>
            <person name="Hickey E.K."/>
            <person name="Gwinn M.L."/>
            <person name="Dougherty B.A."/>
            <person name="Tomb J.-F."/>
            <person name="Fleischmann R.D."/>
            <person name="Richardson D.L."/>
            <person name="Peterson J.D."/>
            <person name="Kerlavage A.R."/>
            <person name="Quackenbush J."/>
            <person name="Salzberg S.L."/>
            <person name="Hanson M."/>
            <person name="van Vugt R."/>
            <person name="Palmer N."/>
            <person name="Adams M.D."/>
            <person name="Gocayne J.D."/>
            <person name="Weidman J.F."/>
            <person name="Utterback T.R."/>
            <person name="Watthey L."/>
            <person name="McDonald L.A."/>
            <person name="Artiach P."/>
            <person name="Bowman C."/>
            <person name="Garland S.A."/>
            <person name="Fujii C."/>
            <person name="Cotton M.D."/>
            <person name="Horst K."/>
            <person name="Roberts K.M."/>
            <person name="Hatch B."/>
            <person name="Smith H.O."/>
            <person name="Venter J.C."/>
        </authorList>
    </citation>
    <scope>NUCLEOTIDE SEQUENCE [LARGE SCALE GENOMIC DNA]</scope>
    <source>
        <strain>ATCC 35210 / DSM 4680 / CIP 102532 / B31</strain>
    </source>
</reference>